<keyword id="KW-0872">Ion channel impairing toxin</keyword>
<keyword id="KW-0528">Neurotoxin</keyword>
<keyword id="KW-0964">Secreted</keyword>
<keyword id="KW-0732">Signal</keyword>
<keyword id="KW-0800">Toxin</keyword>
<dbReference type="GO" id="GO:0005576">
    <property type="term" value="C:extracellular region"/>
    <property type="evidence" value="ECO:0007669"/>
    <property type="project" value="UniProtKB-SubCell"/>
</dbReference>
<dbReference type="GO" id="GO:0099106">
    <property type="term" value="F:ion channel regulator activity"/>
    <property type="evidence" value="ECO:0007669"/>
    <property type="project" value="UniProtKB-KW"/>
</dbReference>
<dbReference type="GO" id="GO:0090729">
    <property type="term" value="F:toxin activity"/>
    <property type="evidence" value="ECO:0007669"/>
    <property type="project" value="UniProtKB-KW"/>
</dbReference>
<comment type="function">
    <text evidence="1">Acts as a neurotoxin by inhibiting an ion channel.</text>
</comment>
<comment type="subcellular location">
    <subcellularLocation>
        <location evidence="1">Secreted</location>
    </subcellularLocation>
</comment>
<comment type="tissue specificity">
    <text>Expressed by the venom duct.</text>
</comment>
<comment type="miscellaneous">
    <text>The mature peptide does not contain cysteine residues.</text>
</comment>
<accession>P0DKM2</accession>
<sequence length="70" mass="7916">MMAKQVVVLLALLLLLPIVTASMGDASGRTGRIYMYGTSIQDLFRYLQLDYQRNVFLLRFLLGRGGLLLH</sequence>
<proteinExistence type="evidence at transcript level"/>
<organism>
    <name type="scientific">Iotyrris olangoensis</name>
    <name type="common">Sea snail</name>
    <name type="synonym">Lophiotoma olangoensis</name>
    <dbReference type="NCBI Taxonomy" id="2420066"/>
    <lineage>
        <taxon>Eukaryota</taxon>
        <taxon>Metazoa</taxon>
        <taxon>Spiralia</taxon>
        <taxon>Lophotrochozoa</taxon>
        <taxon>Mollusca</taxon>
        <taxon>Gastropoda</taxon>
        <taxon>Caenogastropoda</taxon>
        <taxon>Neogastropoda</taxon>
        <taxon>Conoidea</taxon>
        <taxon>Turridae</taxon>
        <taxon>Iotyrris</taxon>
    </lineage>
</organism>
<name>TU179_IOTOL</name>
<feature type="signal peptide" evidence="2">
    <location>
        <begin position="1"/>
        <end position="21"/>
    </location>
</feature>
<feature type="propeptide" id="PRO_0000419834" evidence="2">
    <location>
        <begin position="22"/>
        <end position="32"/>
    </location>
</feature>
<feature type="chain" id="PRO_0000419835" description="Turripeptide OL179">
    <location>
        <begin position="33"/>
        <end position="70"/>
    </location>
</feature>
<evidence type="ECO:0000250" key="1"/>
<evidence type="ECO:0000255" key="2"/>
<protein>
    <recommendedName>
        <fullName>Turripeptide OL179</fullName>
    </recommendedName>
</protein>
<reference key="1">
    <citation type="journal article" date="2006" name="J. Mol. Evol.">
        <title>Genes expressed in a turrid venom duct: divergence and similarity to conotoxins.</title>
        <authorList>
            <person name="Watkins M."/>
            <person name="Hillyard D.R."/>
            <person name="Olivera B.M."/>
        </authorList>
    </citation>
    <scope>NUCLEOTIDE SEQUENCE [MRNA]</scope>
    <source>
        <tissue>Venom duct</tissue>
    </source>
</reference>